<evidence type="ECO:0000255" key="1">
    <source>
        <dbReference type="PROSITE-ProRule" id="PRU00118"/>
    </source>
</evidence>
<evidence type="ECO:0000256" key="2">
    <source>
        <dbReference type="SAM" id="MobiDB-lite"/>
    </source>
</evidence>
<evidence type="ECO:0000305" key="3"/>
<name>RS3_MANSE</name>
<dbReference type="EMBL" id="U12708">
    <property type="protein sequence ID" value="AAB05575.1"/>
    <property type="molecule type" value="mRNA"/>
</dbReference>
<dbReference type="SMR" id="P48153"/>
<dbReference type="EnsemblMetazoa" id="XM_030184205.2">
    <property type="protein sequence ID" value="XP_030040065.1"/>
    <property type="gene ID" value="LOC115455570"/>
</dbReference>
<dbReference type="OrthoDB" id="10248446at2759"/>
<dbReference type="GO" id="GO:0022627">
    <property type="term" value="C:cytosolic small ribosomal subunit"/>
    <property type="evidence" value="ECO:0007669"/>
    <property type="project" value="TreeGrafter"/>
</dbReference>
<dbReference type="GO" id="GO:0005634">
    <property type="term" value="C:nucleus"/>
    <property type="evidence" value="ECO:0007669"/>
    <property type="project" value="TreeGrafter"/>
</dbReference>
<dbReference type="GO" id="GO:0003723">
    <property type="term" value="F:RNA binding"/>
    <property type="evidence" value="ECO:0007669"/>
    <property type="project" value="UniProtKB-KW"/>
</dbReference>
<dbReference type="GO" id="GO:0003735">
    <property type="term" value="F:structural constituent of ribosome"/>
    <property type="evidence" value="ECO:0007669"/>
    <property type="project" value="InterPro"/>
</dbReference>
<dbReference type="GO" id="GO:2001235">
    <property type="term" value="P:positive regulation of apoptotic signaling pathway"/>
    <property type="evidence" value="ECO:0007669"/>
    <property type="project" value="TreeGrafter"/>
</dbReference>
<dbReference type="GO" id="GO:0006412">
    <property type="term" value="P:translation"/>
    <property type="evidence" value="ECO:0007669"/>
    <property type="project" value="InterPro"/>
</dbReference>
<dbReference type="CDD" id="cd02413">
    <property type="entry name" value="KH-II_40S_S3"/>
    <property type="match status" value="1"/>
</dbReference>
<dbReference type="FunFam" id="3.30.1140.32:FF:000005">
    <property type="entry name" value="40S ribosomal protein S3"/>
    <property type="match status" value="1"/>
</dbReference>
<dbReference type="FunFam" id="3.30.300.20:FF:000006">
    <property type="entry name" value="40S ribosomal protein S3"/>
    <property type="match status" value="1"/>
</dbReference>
<dbReference type="Gene3D" id="3.30.300.20">
    <property type="match status" value="1"/>
</dbReference>
<dbReference type="Gene3D" id="3.30.1140.32">
    <property type="entry name" value="Ribosomal protein S3, C-terminal domain"/>
    <property type="match status" value="1"/>
</dbReference>
<dbReference type="InterPro" id="IPR015946">
    <property type="entry name" value="KH_dom-like_a/b"/>
</dbReference>
<dbReference type="InterPro" id="IPR004044">
    <property type="entry name" value="KH_dom_type_2"/>
</dbReference>
<dbReference type="InterPro" id="IPR009019">
    <property type="entry name" value="KH_sf_prok-type"/>
</dbReference>
<dbReference type="InterPro" id="IPR036419">
    <property type="entry name" value="Ribosomal_S3_C_sf"/>
</dbReference>
<dbReference type="InterPro" id="IPR001351">
    <property type="entry name" value="Ribosomal_uS3_C"/>
</dbReference>
<dbReference type="InterPro" id="IPR018280">
    <property type="entry name" value="Ribosomal_uS3_CS"/>
</dbReference>
<dbReference type="InterPro" id="IPR005703">
    <property type="entry name" value="Ribosomal_uS3_euk/arc"/>
</dbReference>
<dbReference type="NCBIfam" id="NF003219">
    <property type="entry name" value="PRK04191.1"/>
    <property type="match status" value="1"/>
</dbReference>
<dbReference type="NCBIfam" id="TIGR01008">
    <property type="entry name" value="uS3_euk_arch"/>
    <property type="match status" value="1"/>
</dbReference>
<dbReference type="PANTHER" id="PTHR11760">
    <property type="entry name" value="30S/40S RIBOSOMAL PROTEIN S3"/>
    <property type="match status" value="1"/>
</dbReference>
<dbReference type="PANTHER" id="PTHR11760:SF32">
    <property type="entry name" value="SMALL RIBOSOMAL SUBUNIT PROTEIN US3"/>
    <property type="match status" value="1"/>
</dbReference>
<dbReference type="Pfam" id="PF07650">
    <property type="entry name" value="KH_2"/>
    <property type="match status" value="1"/>
</dbReference>
<dbReference type="Pfam" id="PF00189">
    <property type="entry name" value="Ribosomal_S3_C"/>
    <property type="match status" value="1"/>
</dbReference>
<dbReference type="SUPFAM" id="SSF54814">
    <property type="entry name" value="Prokaryotic type KH domain (KH-domain type II)"/>
    <property type="match status" value="1"/>
</dbReference>
<dbReference type="SUPFAM" id="SSF54821">
    <property type="entry name" value="Ribosomal protein S3 C-terminal domain"/>
    <property type="match status" value="1"/>
</dbReference>
<dbReference type="PROSITE" id="PS50823">
    <property type="entry name" value="KH_TYPE_2"/>
    <property type="match status" value="1"/>
</dbReference>
<dbReference type="PROSITE" id="PS00548">
    <property type="entry name" value="RIBOSOMAL_S3"/>
    <property type="match status" value="1"/>
</dbReference>
<protein>
    <recommendedName>
        <fullName evidence="3">Small ribosomal subunit protein uS3</fullName>
    </recommendedName>
    <alternativeName>
        <fullName>40S ribosomal protein S3</fullName>
    </alternativeName>
</protein>
<sequence length="243" mass="26731">MAVNNISKKRKFVGDGVFKAELNEFLTRELAEDGYSGVEVRVTPTRSEIIIMATRTQSVLGEKGRRIRELTSVVQKRFNIPEQSVELYAEKVATRGLCAIAQAESLRYKLIGGLAVRRACYGVLRFIMESGARGCEVVVSGKLRGQRAKSMKFVDGLMIHSGDPCNDYVNTATRHVLLRQGVLGIKVKIMLPWDQQGKNGPKKPQPDHILVTEPKDEPAPLEPTSDIRSLAPAPLPQPVAAVA</sequence>
<feature type="chain" id="PRO_0000130329" description="Small ribosomal subunit protein uS3">
    <location>
        <begin position="1"/>
        <end position="243"/>
    </location>
</feature>
<feature type="domain" description="KH type-2" evidence="1">
    <location>
        <begin position="22"/>
        <end position="93"/>
    </location>
</feature>
<feature type="region of interest" description="Disordered" evidence="2">
    <location>
        <begin position="195"/>
        <end position="243"/>
    </location>
</feature>
<keyword id="KW-0687">Ribonucleoprotein</keyword>
<keyword id="KW-0689">Ribosomal protein</keyword>
<keyword id="KW-0694">RNA-binding</keyword>
<proteinExistence type="evidence at transcript level"/>
<reference key="1">
    <citation type="journal article" date="1996" name="Insect Mol. Biol.">
        <title>Primary structure of ribosomal proteins S3 and S7 from Manduca sexta.</title>
        <authorList>
            <person name="Jiang H."/>
            <person name="Wang Y."/>
            <person name="Kanost M.R."/>
        </authorList>
    </citation>
    <scope>NUCLEOTIDE SEQUENCE [MRNA]</scope>
</reference>
<comment type="similarity">
    <text evidence="3">Belongs to the universal ribosomal protein uS3 family.</text>
</comment>
<accession>P48153</accession>
<gene>
    <name type="primary">RpS3</name>
</gene>
<organism>
    <name type="scientific">Manduca sexta</name>
    <name type="common">Tobacco hawkmoth</name>
    <name type="synonym">Tobacco hornworm</name>
    <dbReference type="NCBI Taxonomy" id="7130"/>
    <lineage>
        <taxon>Eukaryota</taxon>
        <taxon>Metazoa</taxon>
        <taxon>Ecdysozoa</taxon>
        <taxon>Arthropoda</taxon>
        <taxon>Hexapoda</taxon>
        <taxon>Insecta</taxon>
        <taxon>Pterygota</taxon>
        <taxon>Neoptera</taxon>
        <taxon>Endopterygota</taxon>
        <taxon>Lepidoptera</taxon>
        <taxon>Glossata</taxon>
        <taxon>Ditrysia</taxon>
        <taxon>Bombycoidea</taxon>
        <taxon>Sphingidae</taxon>
        <taxon>Sphinginae</taxon>
        <taxon>Sphingini</taxon>
        <taxon>Manduca</taxon>
    </lineage>
</organism>